<dbReference type="EMBL" id="CP000141">
    <property type="protein sequence ID" value="ABB15948.1"/>
    <property type="molecule type" value="Genomic_DNA"/>
</dbReference>
<dbReference type="RefSeq" id="WP_011344321.1">
    <property type="nucleotide sequence ID" value="NC_007503.1"/>
</dbReference>
<dbReference type="SMR" id="Q3AC88"/>
<dbReference type="STRING" id="246194.CHY_1414"/>
<dbReference type="KEGG" id="chy:CHY_1414"/>
<dbReference type="eggNOG" id="COG0792">
    <property type="taxonomic scope" value="Bacteria"/>
</dbReference>
<dbReference type="HOGENOM" id="CLU_115353_1_1_9"/>
<dbReference type="InParanoid" id="Q3AC88"/>
<dbReference type="OrthoDB" id="9802516at2"/>
<dbReference type="Proteomes" id="UP000002706">
    <property type="component" value="Chromosome"/>
</dbReference>
<dbReference type="GO" id="GO:0003676">
    <property type="term" value="F:nucleic acid binding"/>
    <property type="evidence" value="ECO:0007669"/>
    <property type="project" value="InterPro"/>
</dbReference>
<dbReference type="CDD" id="cd20736">
    <property type="entry name" value="PoNe_Nuclease"/>
    <property type="match status" value="1"/>
</dbReference>
<dbReference type="Gene3D" id="3.40.1350.10">
    <property type="match status" value="1"/>
</dbReference>
<dbReference type="HAMAP" id="MF_00048">
    <property type="entry name" value="UPF0102"/>
    <property type="match status" value="1"/>
</dbReference>
<dbReference type="InterPro" id="IPR011335">
    <property type="entry name" value="Restrct_endonuc-II-like"/>
</dbReference>
<dbReference type="InterPro" id="IPR011856">
    <property type="entry name" value="tRNA_endonuc-like_dom_sf"/>
</dbReference>
<dbReference type="InterPro" id="IPR003509">
    <property type="entry name" value="UPF0102_YraN-like"/>
</dbReference>
<dbReference type="NCBIfam" id="NF009150">
    <property type="entry name" value="PRK12497.1-3"/>
    <property type="match status" value="1"/>
</dbReference>
<dbReference type="PANTHER" id="PTHR34039">
    <property type="entry name" value="UPF0102 PROTEIN YRAN"/>
    <property type="match status" value="1"/>
</dbReference>
<dbReference type="PANTHER" id="PTHR34039:SF1">
    <property type="entry name" value="UPF0102 PROTEIN YRAN"/>
    <property type="match status" value="1"/>
</dbReference>
<dbReference type="Pfam" id="PF02021">
    <property type="entry name" value="UPF0102"/>
    <property type="match status" value="1"/>
</dbReference>
<dbReference type="SUPFAM" id="SSF52980">
    <property type="entry name" value="Restriction endonuclease-like"/>
    <property type="match status" value="1"/>
</dbReference>
<feature type="chain" id="PRO_0000336153" description="UPF0102 protein CHY_1414">
    <location>
        <begin position="1"/>
        <end position="118"/>
    </location>
</feature>
<proteinExistence type="inferred from homology"/>
<accession>Q3AC88</accession>
<comment type="similarity">
    <text evidence="1">Belongs to the UPF0102 family.</text>
</comment>
<name>Y1414_CARHZ</name>
<keyword id="KW-1185">Reference proteome</keyword>
<organism>
    <name type="scientific">Carboxydothermus hydrogenoformans (strain ATCC BAA-161 / DSM 6008 / Z-2901)</name>
    <dbReference type="NCBI Taxonomy" id="246194"/>
    <lineage>
        <taxon>Bacteria</taxon>
        <taxon>Bacillati</taxon>
        <taxon>Bacillota</taxon>
        <taxon>Clostridia</taxon>
        <taxon>Thermoanaerobacterales</taxon>
        <taxon>Thermoanaerobacteraceae</taxon>
        <taxon>Carboxydothermus</taxon>
    </lineage>
</organism>
<reference key="1">
    <citation type="journal article" date="2005" name="PLoS Genet.">
        <title>Life in hot carbon monoxide: the complete genome sequence of Carboxydothermus hydrogenoformans Z-2901.</title>
        <authorList>
            <person name="Wu M."/>
            <person name="Ren Q."/>
            <person name="Durkin A.S."/>
            <person name="Daugherty S.C."/>
            <person name="Brinkac L.M."/>
            <person name="Dodson R.J."/>
            <person name="Madupu R."/>
            <person name="Sullivan S.A."/>
            <person name="Kolonay J.F."/>
            <person name="Nelson W.C."/>
            <person name="Tallon L.J."/>
            <person name="Jones K.M."/>
            <person name="Ulrich L.E."/>
            <person name="Gonzalez J.M."/>
            <person name="Zhulin I.B."/>
            <person name="Robb F.T."/>
            <person name="Eisen J.A."/>
        </authorList>
    </citation>
    <scope>NUCLEOTIDE SEQUENCE [LARGE SCALE GENOMIC DNA]</scope>
    <source>
        <strain>ATCC BAA-161 / DSM 6008 / Z-2901</strain>
    </source>
</reference>
<gene>
    <name type="ordered locus">CHY_1414</name>
</gene>
<protein>
    <recommendedName>
        <fullName evidence="1">UPF0102 protein CHY_1414</fullName>
    </recommendedName>
</protein>
<sequence>MNRRELGQKWEELAEQYLRKKGYKILTRNYQIRGGEIDIVAQDGEFLVFIEVRFRSDISFGTPSETVNEKKKASLKKAIKVYIHENFLYHLQPRVDFIGIEQKDNRFFVNHYQNVLDF</sequence>
<evidence type="ECO:0000255" key="1">
    <source>
        <dbReference type="HAMAP-Rule" id="MF_00048"/>
    </source>
</evidence>